<protein>
    <recommendedName>
        <fullName evidence="1">Lysine--tRNA ligase</fullName>
        <ecNumber evidence="1">6.1.1.6</ecNumber>
    </recommendedName>
    <alternativeName>
        <fullName evidence="1">Lysyl-tRNA synthetase</fullName>
        <shortName evidence="1">LysRS</shortName>
    </alternativeName>
</protein>
<proteinExistence type="inferred from homology"/>
<evidence type="ECO:0000255" key="1">
    <source>
        <dbReference type="HAMAP-Rule" id="MF_00252"/>
    </source>
</evidence>
<sequence length="500" mass="56973">MTEQTQDENKLIAERRAKLEHIRANCPANGHPNNFDRKHKAADIQAEYGHHTKEELEGMDVQRSIAGRVMAKRGPFLVIQDVSGRIQAYAGKDVQKDLKATFQGLDIGDIIGVTGKLHLSGKGDLYVNMEQYQLLTKALRPLPEKFHGLSDQETRYRQRYVDLIVNEESREAFIMRSKVVSAIRNFMIKKEFMEVETPMMHSIPGGASARPFETHHNALDMAMYLRIAPELYLKRLVVGGFERVFEVNRNFRNEGLSPRHNPEFTMMEFYMAYADYKDLMDLTEEMLSSIATDLCGSTQLPYGEHTVDFGGPYARLSMLDAIKKYNPENATIQSMTYEEVKDVEFMRNLAKSIGMTIEKFWTCGQLLEEIFGETAEPQLMQPTFITGYPADISPLARRNDENHFITDRFEFFIGGREVANGFSELNDAEDQDNRFKAQVDAKDAGDDEAMFYDADYIRALEHGLPPTAGQGIGIDRLVMLFTNTHTIRDVILFPAMRPQG</sequence>
<feature type="chain" id="PRO_1000199249" description="Lysine--tRNA ligase">
    <location>
        <begin position="1"/>
        <end position="500"/>
    </location>
</feature>
<feature type="binding site" evidence="1">
    <location>
        <position position="410"/>
    </location>
    <ligand>
        <name>Mg(2+)</name>
        <dbReference type="ChEBI" id="CHEBI:18420"/>
        <label>1</label>
    </ligand>
</feature>
<feature type="binding site" evidence="1">
    <location>
        <position position="417"/>
    </location>
    <ligand>
        <name>Mg(2+)</name>
        <dbReference type="ChEBI" id="CHEBI:18420"/>
        <label>1</label>
    </ligand>
</feature>
<feature type="binding site" evidence="1">
    <location>
        <position position="417"/>
    </location>
    <ligand>
        <name>Mg(2+)</name>
        <dbReference type="ChEBI" id="CHEBI:18420"/>
        <label>2</label>
    </ligand>
</feature>
<gene>
    <name evidence="1" type="primary">lysS</name>
    <name type="ordered locus">swp_4303</name>
</gene>
<dbReference type="EC" id="6.1.1.6" evidence="1"/>
<dbReference type="EMBL" id="CP000472">
    <property type="protein sequence ID" value="ACJ30954.1"/>
    <property type="molecule type" value="Genomic_DNA"/>
</dbReference>
<dbReference type="RefSeq" id="WP_020914291.1">
    <property type="nucleotide sequence ID" value="NC_011566.1"/>
</dbReference>
<dbReference type="SMR" id="B8CU98"/>
<dbReference type="STRING" id="225849.swp_4303"/>
<dbReference type="KEGG" id="swp:swp_4303"/>
<dbReference type="eggNOG" id="COG1190">
    <property type="taxonomic scope" value="Bacteria"/>
</dbReference>
<dbReference type="HOGENOM" id="CLU_008255_6_0_6"/>
<dbReference type="OrthoDB" id="9802326at2"/>
<dbReference type="Proteomes" id="UP000000753">
    <property type="component" value="Chromosome"/>
</dbReference>
<dbReference type="GO" id="GO:0005829">
    <property type="term" value="C:cytosol"/>
    <property type="evidence" value="ECO:0007669"/>
    <property type="project" value="TreeGrafter"/>
</dbReference>
<dbReference type="GO" id="GO:0005524">
    <property type="term" value="F:ATP binding"/>
    <property type="evidence" value="ECO:0007669"/>
    <property type="project" value="UniProtKB-UniRule"/>
</dbReference>
<dbReference type="GO" id="GO:0004824">
    <property type="term" value="F:lysine-tRNA ligase activity"/>
    <property type="evidence" value="ECO:0007669"/>
    <property type="project" value="UniProtKB-UniRule"/>
</dbReference>
<dbReference type="GO" id="GO:0000287">
    <property type="term" value="F:magnesium ion binding"/>
    <property type="evidence" value="ECO:0007669"/>
    <property type="project" value="UniProtKB-UniRule"/>
</dbReference>
<dbReference type="GO" id="GO:0000049">
    <property type="term" value="F:tRNA binding"/>
    <property type="evidence" value="ECO:0007669"/>
    <property type="project" value="TreeGrafter"/>
</dbReference>
<dbReference type="GO" id="GO:0006430">
    <property type="term" value="P:lysyl-tRNA aminoacylation"/>
    <property type="evidence" value="ECO:0007669"/>
    <property type="project" value="UniProtKB-UniRule"/>
</dbReference>
<dbReference type="CDD" id="cd00775">
    <property type="entry name" value="LysRS_core"/>
    <property type="match status" value="1"/>
</dbReference>
<dbReference type="CDD" id="cd04322">
    <property type="entry name" value="LysRS_N"/>
    <property type="match status" value="1"/>
</dbReference>
<dbReference type="FunFam" id="2.40.50.140:FF:000024">
    <property type="entry name" value="Lysine--tRNA ligase"/>
    <property type="match status" value="1"/>
</dbReference>
<dbReference type="FunFam" id="3.30.930.10:FF:000001">
    <property type="entry name" value="Lysine--tRNA ligase"/>
    <property type="match status" value="1"/>
</dbReference>
<dbReference type="Gene3D" id="3.30.930.10">
    <property type="entry name" value="Bira Bifunctional Protein, Domain 2"/>
    <property type="match status" value="1"/>
</dbReference>
<dbReference type="Gene3D" id="2.40.50.140">
    <property type="entry name" value="Nucleic acid-binding proteins"/>
    <property type="match status" value="1"/>
</dbReference>
<dbReference type="HAMAP" id="MF_00252">
    <property type="entry name" value="Lys_tRNA_synth_class2"/>
    <property type="match status" value="1"/>
</dbReference>
<dbReference type="InterPro" id="IPR004364">
    <property type="entry name" value="Aa-tRNA-synt_II"/>
</dbReference>
<dbReference type="InterPro" id="IPR006195">
    <property type="entry name" value="aa-tRNA-synth_II"/>
</dbReference>
<dbReference type="InterPro" id="IPR045864">
    <property type="entry name" value="aa-tRNA-synth_II/BPL/LPL"/>
</dbReference>
<dbReference type="InterPro" id="IPR002313">
    <property type="entry name" value="Lys-tRNA-ligase_II"/>
</dbReference>
<dbReference type="InterPro" id="IPR044136">
    <property type="entry name" value="Lys-tRNA-ligase_II_N"/>
</dbReference>
<dbReference type="InterPro" id="IPR018149">
    <property type="entry name" value="Lys-tRNA-synth_II_C"/>
</dbReference>
<dbReference type="InterPro" id="IPR012340">
    <property type="entry name" value="NA-bd_OB-fold"/>
</dbReference>
<dbReference type="InterPro" id="IPR004365">
    <property type="entry name" value="NA-bd_OB_tRNA"/>
</dbReference>
<dbReference type="NCBIfam" id="TIGR00499">
    <property type="entry name" value="lysS_bact"/>
    <property type="match status" value="1"/>
</dbReference>
<dbReference type="NCBIfam" id="NF001756">
    <property type="entry name" value="PRK00484.1"/>
    <property type="match status" value="1"/>
</dbReference>
<dbReference type="PANTHER" id="PTHR42918:SF15">
    <property type="entry name" value="LYSINE--TRNA LIGASE, CHLOROPLASTIC_MITOCHONDRIAL"/>
    <property type="match status" value="1"/>
</dbReference>
<dbReference type="PANTHER" id="PTHR42918">
    <property type="entry name" value="LYSYL-TRNA SYNTHETASE"/>
    <property type="match status" value="1"/>
</dbReference>
<dbReference type="Pfam" id="PF00152">
    <property type="entry name" value="tRNA-synt_2"/>
    <property type="match status" value="1"/>
</dbReference>
<dbReference type="Pfam" id="PF01336">
    <property type="entry name" value="tRNA_anti-codon"/>
    <property type="match status" value="1"/>
</dbReference>
<dbReference type="PRINTS" id="PR00982">
    <property type="entry name" value="TRNASYNTHLYS"/>
</dbReference>
<dbReference type="SUPFAM" id="SSF55681">
    <property type="entry name" value="Class II aaRS and biotin synthetases"/>
    <property type="match status" value="1"/>
</dbReference>
<dbReference type="SUPFAM" id="SSF50249">
    <property type="entry name" value="Nucleic acid-binding proteins"/>
    <property type="match status" value="1"/>
</dbReference>
<dbReference type="PROSITE" id="PS50862">
    <property type="entry name" value="AA_TRNA_LIGASE_II"/>
    <property type="match status" value="1"/>
</dbReference>
<name>SYK_SHEPW</name>
<accession>B8CU98</accession>
<reference key="1">
    <citation type="journal article" date="2008" name="PLoS ONE">
        <title>Environmental adaptation: genomic analysis of the piezotolerant and psychrotolerant deep-sea iron reducing bacterium Shewanella piezotolerans WP3.</title>
        <authorList>
            <person name="Wang F."/>
            <person name="Wang J."/>
            <person name="Jian H."/>
            <person name="Zhang B."/>
            <person name="Li S."/>
            <person name="Wang F."/>
            <person name="Zeng X."/>
            <person name="Gao L."/>
            <person name="Bartlett D.H."/>
            <person name="Yu J."/>
            <person name="Hu S."/>
            <person name="Xiao X."/>
        </authorList>
    </citation>
    <scope>NUCLEOTIDE SEQUENCE [LARGE SCALE GENOMIC DNA]</scope>
    <source>
        <strain>WP3 / JCM 13877</strain>
    </source>
</reference>
<keyword id="KW-0030">Aminoacyl-tRNA synthetase</keyword>
<keyword id="KW-0067">ATP-binding</keyword>
<keyword id="KW-0963">Cytoplasm</keyword>
<keyword id="KW-0436">Ligase</keyword>
<keyword id="KW-0460">Magnesium</keyword>
<keyword id="KW-0479">Metal-binding</keyword>
<keyword id="KW-0547">Nucleotide-binding</keyword>
<keyword id="KW-0648">Protein biosynthesis</keyword>
<organism>
    <name type="scientific">Shewanella piezotolerans (strain WP3 / JCM 13877)</name>
    <dbReference type="NCBI Taxonomy" id="225849"/>
    <lineage>
        <taxon>Bacteria</taxon>
        <taxon>Pseudomonadati</taxon>
        <taxon>Pseudomonadota</taxon>
        <taxon>Gammaproteobacteria</taxon>
        <taxon>Alteromonadales</taxon>
        <taxon>Shewanellaceae</taxon>
        <taxon>Shewanella</taxon>
    </lineage>
</organism>
<comment type="catalytic activity">
    <reaction evidence="1">
        <text>tRNA(Lys) + L-lysine + ATP = L-lysyl-tRNA(Lys) + AMP + diphosphate</text>
        <dbReference type="Rhea" id="RHEA:20792"/>
        <dbReference type="Rhea" id="RHEA-COMP:9696"/>
        <dbReference type="Rhea" id="RHEA-COMP:9697"/>
        <dbReference type="ChEBI" id="CHEBI:30616"/>
        <dbReference type="ChEBI" id="CHEBI:32551"/>
        <dbReference type="ChEBI" id="CHEBI:33019"/>
        <dbReference type="ChEBI" id="CHEBI:78442"/>
        <dbReference type="ChEBI" id="CHEBI:78529"/>
        <dbReference type="ChEBI" id="CHEBI:456215"/>
        <dbReference type="EC" id="6.1.1.6"/>
    </reaction>
</comment>
<comment type="cofactor">
    <cofactor evidence="1">
        <name>Mg(2+)</name>
        <dbReference type="ChEBI" id="CHEBI:18420"/>
    </cofactor>
    <text evidence="1">Binds 3 Mg(2+) ions per subunit.</text>
</comment>
<comment type="subunit">
    <text evidence="1">Homodimer.</text>
</comment>
<comment type="subcellular location">
    <subcellularLocation>
        <location evidence="1">Cytoplasm</location>
    </subcellularLocation>
</comment>
<comment type="similarity">
    <text evidence="1">Belongs to the class-II aminoacyl-tRNA synthetase family.</text>
</comment>